<accession>Q63S19</accession>
<organism>
    <name type="scientific">Burkholderia pseudomallei (strain K96243)</name>
    <dbReference type="NCBI Taxonomy" id="272560"/>
    <lineage>
        <taxon>Bacteria</taxon>
        <taxon>Pseudomonadati</taxon>
        <taxon>Pseudomonadota</taxon>
        <taxon>Betaproteobacteria</taxon>
        <taxon>Burkholderiales</taxon>
        <taxon>Burkholderiaceae</taxon>
        <taxon>Burkholderia</taxon>
        <taxon>pseudomallei group</taxon>
    </lineage>
</organism>
<name>METN1_BURPS</name>
<sequence>MIEIRNLSQRFEGPRGWIEALHNVNLTIPQGEVFGIIGRSGAGKSTLVRTINLLTRPSEGSVFVGGRDLTQLSAAELRGARRDIGMIFQHFNLLSSRTVFDNVALPLELAGVKRAQIEATVLPLLDLVGLAAQKDRYPAQISGGQKQRVGIARALASKPKVLLSDEATSALDPETTRAILDLLRRINRELGLTIVLITHQMEVIKDVCDRVAVLDAGRVVEEGNVIDVFMRPHHEVTRALIGDVIAQELPPAMKARVAERLKTGSGHLLRLAFTGSGVDQPILSETIRRYELDFNILHGQIDEIQGRAFGSLAVLATGEPGKVGQAFAYLREQGVVVEELSYVE</sequence>
<protein>
    <recommendedName>
        <fullName evidence="1">Methionine import ATP-binding protein MetN 1</fullName>
        <ecNumber evidence="1">7.4.2.11</ecNumber>
    </recommendedName>
</protein>
<gene>
    <name evidence="1" type="primary">metN1</name>
    <name type="ordered locus">BPSL2503</name>
</gene>
<keyword id="KW-0029">Amino-acid transport</keyword>
<keyword id="KW-0067">ATP-binding</keyword>
<keyword id="KW-0997">Cell inner membrane</keyword>
<keyword id="KW-1003">Cell membrane</keyword>
<keyword id="KW-0472">Membrane</keyword>
<keyword id="KW-0547">Nucleotide-binding</keyword>
<keyword id="KW-1185">Reference proteome</keyword>
<keyword id="KW-1278">Translocase</keyword>
<keyword id="KW-0813">Transport</keyword>
<reference key="1">
    <citation type="journal article" date="2004" name="Proc. Natl. Acad. Sci. U.S.A.">
        <title>Genomic plasticity of the causative agent of melioidosis, Burkholderia pseudomallei.</title>
        <authorList>
            <person name="Holden M.T.G."/>
            <person name="Titball R.W."/>
            <person name="Peacock S.J."/>
            <person name="Cerdeno-Tarraga A.-M."/>
            <person name="Atkins T."/>
            <person name="Crossman L.C."/>
            <person name="Pitt T."/>
            <person name="Churcher C."/>
            <person name="Mungall K.L."/>
            <person name="Bentley S.D."/>
            <person name="Sebaihia M."/>
            <person name="Thomson N.R."/>
            <person name="Bason N."/>
            <person name="Beacham I.R."/>
            <person name="Brooks K."/>
            <person name="Brown K.A."/>
            <person name="Brown N.F."/>
            <person name="Challis G.L."/>
            <person name="Cherevach I."/>
            <person name="Chillingworth T."/>
            <person name="Cronin A."/>
            <person name="Crossett B."/>
            <person name="Davis P."/>
            <person name="DeShazer D."/>
            <person name="Feltwell T."/>
            <person name="Fraser A."/>
            <person name="Hance Z."/>
            <person name="Hauser H."/>
            <person name="Holroyd S."/>
            <person name="Jagels K."/>
            <person name="Keith K.E."/>
            <person name="Maddison M."/>
            <person name="Moule S."/>
            <person name="Price C."/>
            <person name="Quail M.A."/>
            <person name="Rabbinowitsch E."/>
            <person name="Rutherford K."/>
            <person name="Sanders M."/>
            <person name="Simmonds M."/>
            <person name="Songsivilai S."/>
            <person name="Stevens K."/>
            <person name="Tumapa S."/>
            <person name="Vesaratchavest M."/>
            <person name="Whitehead S."/>
            <person name="Yeats C."/>
            <person name="Barrell B.G."/>
            <person name="Oyston P.C.F."/>
            <person name="Parkhill J."/>
        </authorList>
    </citation>
    <scope>NUCLEOTIDE SEQUENCE [LARGE SCALE GENOMIC DNA]</scope>
    <source>
        <strain>K96243</strain>
    </source>
</reference>
<evidence type="ECO:0000255" key="1">
    <source>
        <dbReference type="HAMAP-Rule" id="MF_01719"/>
    </source>
</evidence>
<comment type="function">
    <text evidence="1">Part of the ABC transporter complex MetNIQ involved in methionine import. Responsible for energy coupling to the transport system.</text>
</comment>
<comment type="catalytic activity">
    <reaction evidence="1">
        <text>L-methionine(out) + ATP + H2O = L-methionine(in) + ADP + phosphate + H(+)</text>
        <dbReference type="Rhea" id="RHEA:29779"/>
        <dbReference type="ChEBI" id="CHEBI:15377"/>
        <dbReference type="ChEBI" id="CHEBI:15378"/>
        <dbReference type="ChEBI" id="CHEBI:30616"/>
        <dbReference type="ChEBI" id="CHEBI:43474"/>
        <dbReference type="ChEBI" id="CHEBI:57844"/>
        <dbReference type="ChEBI" id="CHEBI:456216"/>
        <dbReference type="EC" id="7.4.2.11"/>
    </reaction>
</comment>
<comment type="catalytic activity">
    <reaction evidence="1">
        <text>D-methionine(out) + ATP + H2O = D-methionine(in) + ADP + phosphate + H(+)</text>
        <dbReference type="Rhea" id="RHEA:29767"/>
        <dbReference type="ChEBI" id="CHEBI:15377"/>
        <dbReference type="ChEBI" id="CHEBI:15378"/>
        <dbReference type="ChEBI" id="CHEBI:30616"/>
        <dbReference type="ChEBI" id="CHEBI:43474"/>
        <dbReference type="ChEBI" id="CHEBI:57932"/>
        <dbReference type="ChEBI" id="CHEBI:456216"/>
        <dbReference type="EC" id="7.4.2.11"/>
    </reaction>
</comment>
<comment type="subunit">
    <text evidence="1">The complex is composed of two ATP-binding proteins (MetN), two transmembrane proteins (MetI) and a solute-binding protein (MetQ).</text>
</comment>
<comment type="subcellular location">
    <subcellularLocation>
        <location evidence="1">Cell inner membrane</location>
        <topology evidence="1">Peripheral membrane protein</topology>
    </subcellularLocation>
</comment>
<comment type="similarity">
    <text evidence="1">Belongs to the ABC transporter superfamily. Methionine importer (TC 3.A.1.24) family.</text>
</comment>
<proteinExistence type="inferred from homology"/>
<feature type="chain" id="PRO_0000270265" description="Methionine import ATP-binding protein MetN 1">
    <location>
        <begin position="1"/>
        <end position="344"/>
    </location>
</feature>
<feature type="domain" description="ABC transporter" evidence="1">
    <location>
        <begin position="2"/>
        <end position="241"/>
    </location>
</feature>
<feature type="binding site" evidence="1">
    <location>
        <begin position="38"/>
        <end position="45"/>
    </location>
    <ligand>
        <name>ATP</name>
        <dbReference type="ChEBI" id="CHEBI:30616"/>
    </ligand>
</feature>
<dbReference type="EC" id="7.4.2.11" evidence="1"/>
<dbReference type="EMBL" id="BX571965">
    <property type="protein sequence ID" value="CAH36509.1"/>
    <property type="molecule type" value="Genomic_DNA"/>
</dbReference>
<dbReference type="RefSeq" id="WP_004190044.1">
    <property type="nucleotide sequence ID" value="NZ_CP009538.1"/>
</dbReference>
<dbReference type="RefSeq" id="YP_109098.1">
    <property type="nucleotide sequence ID" value="NC_006350.1"/>
</dbReference>
<dbReference type="SMR" id="Q63S19"/>
<dbReference type="STRING" id="272560.BPSL2503"/>
<dbReference type="KEGG" id="bps:BPSL2503"/>
<dbReference type="PATRIC" id="fig|272560.51.peg.2879"/>
<dbReference type="eggNOG" id="COG1135">
    <property type="taxonomic scope" value="Bacteria"/>
</dbReference>
<dbReference type="Proteomes" id="UP000000605">
    <property type="component" value="Chromosome 1"/>
</dbReference>
<dbReference type="GO" id="GO:0005886">
    <property type="term" value="C:plasma membrane"/>
    <property type="evidence" value="ECO:0007669"/>
    <property type="project" value="UniProtKB-SubCell"/>
</dbReference>
<dbReference type="GO" id="GO:0033232">
    <property type="term" value="F:ABC-type D-methionine transporter activity"/>
    <property type="evidence" value="ECO:0007669"/>
    <property type="project" value="UniProtKB-EC"/>
</dbReference>
<dbReference type="GO" id="GO:0005524">
    <property type="term" value="F:ATP binding"/>
    <property type="evidence" value="ECO:0007669"/>
    <property type="project" value="UniProtKB-KW"/>
</dbReference>
<dbReference type="GO" id="GO:0016887">
    <property type="term" value="F:ATP hydrolysis activity"/>
    <property type="evidence" value="ECO:0007669"/>
    <property type="project" value="InterPro"/>
</dbReference>
<dbReference type="CDD" id="cd03258">
    <property type="entry name" value="ABC_MetN_methionine_transporter"/>
    <property type="match status" value="1"/>
</dbReference>
<dbReference type="FunFam" id="3.40.50.300:FF:000056">
    <property type="entry name" value="Cell division ATP-binding protein FtsE"/>
    <property type="match status" value="1"/>
</dbReference>
<dbReference type="Gene3D" id="3.30.70.260">
    <property type="match status" value="1"/>
</dbReference>
<dbReference type="Gene3D" id="3.40.50.300">
    <property type="entry name" value="P-loop containing nucleotide triphosphate hydrolases"/>
    <property type="match status" value="1"/>
</dbReference>
<dbReference type="InterPro" id="IPR003593">
    <property type="entry name" value="AAA+_ATPase"/>
</dbReference>
<dbReference type="InterPro" id="IPR003439">
    <property type="entry name" value="ABC_transporter-like_ATP-bd"/>
</dbReference>
<dbReference type="InterPro" id="IPR017871">
    <property type="entry name" value="ABC_transporter-like_CS"/>
</dbReference>
<dbReference type="InterPro" id="IPR045865">
    <property type="entry name" value="ACT-like_dom_sf"/>
</dbReference>
<dbReference type="InterPro" id="IPR041701">
    <property type="entry name" value="MetN_ABC"/>
</dbReference>
<dbReference type="InterPro" id="IPR050086">
    <property type="entry name" value="MetN_ABC_transporter-like"/>
</dbReference>
<dbReference type="InterPro" id="IPR018449">
    <property type="entry name" value="NIL_domain"/>
</dbReference>
<dbReference type="InterPro" id="IPR027417">
    <property type="entry name" value="P-loop_NTPase"/>
</dbReference>
<dbReference type="PANTHER" id="PTHR43166">
    <property type="entry name" value="AMINO ACID IMPORT ATP-BINDING PROTEIN"/>
    <property type="match status" value="1"/>
</dbReference>
<dbReference type="PANTHER" id="PTHR43166:SF30">
    <property type="entry name" value="METHIONINE IMPORT ATP-BINDING PROTEIN METN"/>
    <property type="match status" value="1"/>
</dbReference>
<dbReference type="Pfam" id="PF00005">
    <property type="entry name" value="ABC_tran"/>
    <property type="match status" value="1"/>
</dbReference>
<dbReference type="Pfam" id="PF09383">
    <property type="entry name" value="NIL"/>
    <property type="match status" value="1"/>
</dbReference>
<dbReference type="SMART" id="SM00382">
    <property type="entry name" value="AAA"/>
    <property type="match status" value="1"/>
</dbReference>
<dbReference type="SMART" id="SM00930">
    <property type="entry name" value="NIL"/>
    <property type="match status" value="1"/>
</dbReference>
<dbReference type="SUPFAM" id="SSF55021">
    <property type="entry name" value="ACT-like"/>
    <property type="match status" value="1"/>
</dbReference>
<dbReference type="SUPFAM" id="SSF52540">
    <property type="entry name" value="P-loop containing nucleoside triphosphate hydrolases"/>
    <property type="match status" value="1"/>
</dbReference>
<dbReference type="PROSITE" id="PS00211">
    <property type="entry name" value="ABC_TRANSPORTER_1"/>
    <property type="match status" value="1"/>
</dbReference>
<dbReference type="PROSITE" id="PS50893">
    <property type="entry name" value="ABC_TRANSPORTER_2"/>
    <property type="match status" value="1"/>
</dbReference>
<dbReference type="PROSITE" id="PS51264">
    <property type="entry name" value="METN"/>
    <property type="match status" value="1"/>
</dbReference>